<reference key="1">
    <citation type="journal article" date="2003" name="Proc. Natl. Acad. Sci. U.S.A.">
        <title>The complete genome sequence of Chromobacterium violaceum reveals remarkable and exploitable bacterial adaptability.</title>
        <authorList>
            <person name="Vasconcelos A.T.R."/>
            <person name="de Almeida D.F."/>
            <person name="Hungria M."/>
            <person name="Guimaraes C.T."/>
            <person name="Antonio R.V."/>
            <person name="Almeida F.C."/>
            <person name="de Almeida L.G.P."/>
            <person name="de Almeida R."/>
            <person name="Alves-Gomes J.A."/>
            <person name="Andrade E.M."/>
            <person name="Araripe J."/>
            <person name="de Araujo M.F.F."/>
            <person name="Astolfi-Filho S."/>
            <person name="Azevedo V."/>
            <person name="Baptista A.J."/>
            <person name="Bataus L.A.M."/>
            <person name="Batista J.S."/>
            <person name="Belo A."/>
            <person name="van den Berg C."/>
            <person name="Bogo M."/>
            <person name="Bonatto S."/>
            <person name="Bordignon J."/>
            <person name="Brigido M.M."/>
            <person name="Brito C.A."/>
            <person name="Brocchi M."/>
            <person name="Burity H.A."/>
            <person name="Camargo A.A."/>
            <person name="Cardoso D.D.P."/>
            <person name="Carneiro N.P."/>
            <person name="Carraro D.M."/>
            <person name="Carvalho C.M.B."/>
            <person name="Cascardo J.C.M."/>
            <person name="Cavada B.S."/>
            <person name="Chueire L.M.O."/>
            <person name="Creczynski-Pasa T.B."/>
            <person name="Cunha-Junior N.C."/>
            <person name="Fagundes N."/>
            <person name="Falcao C.L."/>
            <person name="Fantinatti F."/>
            <person name="Farias I.P."/>
            <person name="Felipe M.S.S."/>
            <person name="Ferrari L.P."/>
            <person name="Ferro J.A."/>
            <person name="Ferro M.I.T."/>
            <person name="Franco G.R."/>
            <person name="Freitas N.S.A."/>
            <person name="Furlan L.R."/>
            <person name="Gazzinelli R.T."/>
            <person name="Gomes E.A."/>
            <person name="Goncalves P.R."/>
            <person name="Grangeiro T.B."/>
            <person name="Grattapaglia D."/>
            <person name="Grisard E.C."/>
            <person name="Hanna E.S."/>
            <person name="Jardim S.N."/>
            <person name="Laurino J."/>
            <person name="Leoi L.C.T."/>
            <person name="Lima L.F.A."/>
            <person name="Loureiro M.F."/>
            <person name="Lyra M.C.C.P."/>
            <person name="Madeira H.M.F."/>
            <person name="Manfio G.P."/>
            <person name="Maranhao A.Q."/>
            <person name="Martins W.S."/>
            <person name="di Mauro S.M.Z."/>
            <person name="de Medeiros S.R.B."/>
            <person name="Meissner R.V."/>
            <person name="Moreira M.A.M."/>
            <person name="Nascimento F.F."/>
            <person name="Nicolas M.F."/>
            <person name="Oliveira J.G."/>
            <person name="Oliveira S.C."/>
            <person name="Paixao R.F.C."/>
            <person name="Parente J.A."/>
            <person name="Pedrosa F.O."/>
            <person name="Pena S.D.J."/>
            <person name="Pereira J.O."/>
            <person name="Pereira M."/>
            <person name="Pinto L.S.R.C."/>
            <person name="Pinto L.S."/>
            <person name="Porto J.I.R."/>
            <person name="Potrich D.P."/>
            <person name="Ramalho-Neto C.E."/>
            <person name="Reis A.M.M."/>
            <person name="Rigo L.U."/>
            <person name="Rondinelli E."/>
            <person name="Santos E.B.P."/>
            <person name="Santos F.R."/>
            <person name="Schneider M.P.C."/>
            <person name="Seuanez H.N."/>
            <person name="Silva A.M.R."/>
            <person name="da Silva A.L.C."/>
            <person name="Silva D.W."/>
            <person name="Silva R."/>
            <person name="Simoes I.C."/>
            <person name="Simon D."/>
            <person name="Soares C.M.A."/>
            <person name="Soares R.B.A."/>
            <person name="Souza E.M."/>
            <person name="Souza K.R.L."/>
            <person name="Souza R.C."/>
            <person name="Steffens M.B.R."/>
            <person name="Steindel M."/>
            <person name="Teixeira S.R."/>
            <person name="Urmenyi T."/>
            <person name="Vettore A."/>
            <person name="Wassem R."/>
            <person name="Zaha A."/>
            <person name="Simpson A.J.G."/>
        </authorList>
    </citation>
    <scope>NUCLEOTIDE SEQUENCE [LARGE SCALE GENOMIC DNA]</scope>
    <source>
        <strain>ATCC 12472 / DSM 30191 / JCM 1249 / CCUG 213 / NBRC 12614 / NCIMB 9131 / NCTC 9757 / MK</strain>
    </source>
</reference>
<gene>
    <name evidence="1" type="primary">rplU</name>
    <name type="ordered locus">CV_0848</name>
</gene>
<sequence length="103" mass="11540">MYAVIKTGGKQYKVAIGEKLKVEQIPADVDSQIVLEEVLMIADGEQVVVGAPLVSGATVKATVVSHGRGEKIRIFKMRRRKHYQKHQGHRQNYTEIRIDAISK</sequence>
<dbReference type="EMBL" id="AE016825">
    <property type="protein sequence ID" value="AAQ58523.1"/>
    <property type="molecule type" value="Genomic_DNA"/>
</dbReference>
<dbReference type="RefSeq" id="WP_011134403.1">
    <property type="nucleotide sequence ID" value="NC_005085.1"/>
</dbReference>
<dbReference type="SMR" id="Q7NZS3"/>
<dbReference type="STRING" id="243365.CV_0848"/>
<dbReference type="GeneID" id="66365252"/>
<dbReference type="KEGG" id="cvi:CV_0848"/>
<dbReference type="eggNOG" id="COG0261">
    <property type="taxonomic scope" value="Bacteria"/>
</dbReference>
<dbReference type="HOGENOM" id="CLU_061463_3_2_4"/>
<dbReference type="OrthoDB" id="9813334at2"/>
<dbReference type="Proteomes" id="UP000001424">
    <property type="component" value="Chromosome"/>
</dbReference>
<dbReference type="GO" id="GO:0005737">
    <property type="term" value="C:cytoplasm"/>
    <property type="evidence" value="ECO:0007669"/>
    <property type="project" value="UniProtKB-ARBA"/>
</dbReference>
<dbReference type="GO" id="GO:1990904">
    <property type="term" value="C:ribonucleoprotein complex"/>
    <property type="evidence" value="ECO:0007669"/>
    <property type="project" value="UniProtKB-KW"/>
</dbReference>
<dbReference type="GO" id="GO:0005840">
    <property type="term" value="C:ribosome"/>
    <property type="evidence" value="ECO:0007669"/>
    <property type="project" value="UniProtKB-KW"/>
</dbReference>
<dbReference type="GO" id="GO:0019843">
    <property type="term" value="F:rRNA binding"/>
    <property type="evidence" value="ECO:0007669"/>
    <property type="project" value="UniProtKB-UniRule"/>
</dbReference>
<dbReference type="GO" id="GO:0003735">
    <property type="term" value="F:structural constituent of ribosome"/>
    <property type="evidence" value="ECO:0007669"/>
    <property type="project" value="InterPro"/>
</dbReference>
<dbReference type="GO" id="GO:0006412">
    <property type="term" value="P:translation"/>
    <property type="evidence" value="ECO:0007669"/>
    <property type="project" value="UniProtKB-UniRule"/>
</dbReference>
<dbReference type="HAMAP" id="MF_01363">
    <property type="entry name" value="Ribosomal_bL21"/>
    <property type="match status" value="1"/>
</dbReference>
<dbReference type="InterPro" id="IPR028909">
    <property type="entry name" value="bL21-like"/>
</dbReference>
<dbReference type="InterPro" id="IPR036164">
    <property type="entry name" value="bL21-like_sf"/>
</dbReference>
<dbReference type="InterPro" id="IPR001787">
    <property type="entry name" value="Ribosomal_bL21"/>
</dbReference>
<dbReference type="InterPro" id="IPR018258">
    <property type="entry name" value="Ribosomal_bL21_CS"/>
</dbReference>
<dbReference type="NCBIfam" id="TIGR00061">
    <property type="entry name" value="L21"/>
    <property type="match status" value="1"/>
</dbReference>
<dbReference type="PANTHER" id="PTHR21349">
    <property type="entry name" value="50S RIBOSOMAL PROTEIN L21"/>
    <property type="match status" value="1"/>
</dbReference>
<dbReference type="PANTHER" id="PTHR21349:SF0">
    <property type="entry name" value="LARGE RIBOSOMAL SUBUNIT PROTEIN BL21M"/>
    <property type="match status" value="1"/>
</dbReference>
<dbReference type="Pfam" id="PF00829">
    <property type="entry name" value="Ribosomal_L21p"/>
    <property type="match status" value="1"/>
</dbReference>
<dbReference type="SUPFAM" id="SSF141091">
    <property type="entry name" value="L21p-like"/>
    <property type="match status" value="1"/>
</dbReference>
<dbReference type="PROSITE" id="PS01169">
    <property type="entry name" value="RIBOSOMAL_L21"/>
    <property type="match status" value="1"/>
</dbReference>
<feature type="chain" id="PRO_0000269300" description="Large ribosomal subunit protein bL21">
    <location>
        <begin position="1"/>
        <end position="103"/>
    </location>
</feature>
<protein>
    <recommendedName>
        <fullName evidence="1">Large ribosomal subunit protein bL21</fullName>
    </recommendedName>
    <alternativeName>
        <fullName evidence="2">50S ribosomal protein L21</fullName>
    </alternativeName>
</protein>
<organism>
    <name type="scientific">Chromobacterium violaceum (strain ATCC 12472 / DSM 30191 / JCM 1249 / CCUG 213 / NBRC 12614 / NCIMB 9131 / NCTC 9757 / MK)</name>
    <dbReference type="NCBI Taxonomy" id="243365"/>
    <lineage>
        <taxon>Bacteria</taxon>
        <taxon>Pseudomonadati</taxon>
        <taxon>Pseudomonadota</taxon>
        <taxon>Betaproteobacteria</taxon>
        <taxon>Neisseriales</taxon>
        <taxon>Chromobacteriaceae</taxon>
        <taxon>Chromobacterium</taxon>
    </lineage>
</organism>
<accession>Q7NZS3</accession>
<keyword id="KW-1185">Reference proteome</keyword>
<keyword id="KW-0687">Ribonucleoprotein</keyword>
<keyword id="KW-0689">Ribosomal protein</keyword>
<keyword id="KW-0694">RNA-binding</keyword>
<keyword id="KW-0699">rRNA-binding</keyword>
<proteinExistence type="inferred from homology"/>
<comment type="function">
    <text evidence="1">This protein binds to 23S rRNA in the presence of protein L20.</text>
</comment>
<comment type="subunit">
    <text evidence="1">Part of the 50S ribosomal subunit. Contacts protein L20.</text>
</comment>
<comment type="similarity">
    <text evidence="1">Belongs to the bacterial ribosomal protein bL21 family.</text>
</comment>
<evidence type="ECO:0000255" key="1">
    <source>
        <dbReference type="HAMAP-Rule" id="MF_01363"/>
    </source>
</evidence>
<evidence type="ECO:0000305" key="2"/>
<name>RL21_CHRVO</name>